<reference key="1">
    <citation type="journal article" date="2008" name="Insect Mol. Biol.">
        <title>Isolation and functional characterization of two independently-evolved fatty acid Delta12-desaturase genes from insects.</title>
        <authorList>
            <person name="Zhou X.-R."/>
            <person name="Horne I."/>
            <person name="Damcevski K."/>
            <person name="Haritos V."/>
            <person name="Green A."/>
            <person name="Singh S."/>
        </authorList>
    </citation>
    <scope>NUCLEOTIDE SEQUENCE [MRNA]</scope>
    <scope>FUNCTION</scope>
    <scope>CATALYTIC ACTIVITY</scope>
</reference>
<reference key="2">
    <citation type="journal article" date="2011" name="J. Biol. Chem.">
        <title>Mechanistic and structural insights into the regioselectivity of an acyl-CoA fatty acid desaturase via directed molecular evolution.</title>
        <authorList>
            <person name="Vanhercke T."/>
            <person name="Shrestha P."/>
            <person name="Green A.G."/>
            <person name="Singh S.P."/>
        </authorList>
    </citation>
    <scope>FUNCTION</scope>
    <scope>CATALYTIC ACTIVITY</scope>
</reference>
<organism>
    <name type="scientific">Acheta domesticus</name>
    <name type="common">House cricket</name>
    <dbReference type="NCBI Taxonomy" id="6997"/>
    <lineage>
        <taxon>Eukaryota</taxon>
        <taxon>Metazoa</taxon>
        <taxon>Ecdysozoa</taxon>
        <taxon>Arthropoda</taxon>
        <taxon>Hexapoda</taxon>
        <taxon>Insecta</taxon>
        <taxon>Pterygota</taxon>
        <taxon>Neoptera</taxon>
        <taxon>Polyneoptera</taxon>
        <taxon>Orthoptera</taxon>
        <taxon>Ensifera</taxon>
        <taxon>Gryllidea</taxon>
        <taxon>Grylloidea</taxon>
        <taxon>Gryllidae</taxon>
        <taxon>Gryllinae</taxon>
        <taxon>Acheta</taxon>
    </lineage>
</organism>
<keyword id="KW-0275">Fatty acid biosynthesis</keyword>
<keyword id="KW-0276">Fatty acid metabolism</keyword>
<keyword id="KW-0408">Iron</keyword>
<keyword id="KW-0444">Lipid biosynthesis</keyword>
<keyword id="KW-0443">Lipid metabolism</keyword>
<keyword id="KW-0472">Membrane</keyword>
<keyword id="KW-0479">Metal-binding</keyword>
<keyword id="KW-0560">Oxidoreductase</keyword>
<keyword id="KW-0812">Transmembrane</keyword>
<keyword id="KW-1133">Transmembrane helix</keyword>
<proteinExistence type="evidence at protein level"/>
<comment type="function">
    <text evidence="6 7">Catalyzes the formation of a Delta12 double bond, acting on monounsaturated fatty acyl substrates like palmitoleoyl-CoA ((9Z)-hexadecenoyl-CoA) and oleoyl-CoA ((9Z)-octadecenoyl-CoA) with higher desaturation activity on (9Z)-octadecenoyl-CoA than (9Z)-hexadecenoyl-CoA. Requires preexisting cis double bond at the Delta9 position of fatty acyls to be able to insert the Delta12 double bond. Delta12-desaturation of (9Z)-octadecenoyl-CoA in insects produces (9Z,12Z)-octadecadienoyl-CoA (linoleoyl-CoA) which may be used to supply precursors of crucial mediators of immunity and reproduction and other essential functions (PubMed:19133076, PubMed:21300802). Can also catalyze Delta9-desaturation on saturated fatty acyl substrates like palmitoyl-CoA (hexadecanoyl-CoA) but with lower efficiency (PubMed:21300802).</text>
</comment>
<comment type="catalytic activity">
    <reaction evidence="7 11">
        <text>(9Z)-octadecenoyl-CoA + 2 Fe(II)-[cytochrome b5] + O2 + 2 H(+) = (9Z,12Z)-octadecadienoyl-CoA + 2 Fe(III)-[cytochrome b5] + 2 H2O</text>
        <dbReference type="Rhea" id="RHEA:25856"/>
        <dbReference type="Rhea" id="RHEA-COMP:10438"/>
        <dbReference type="Rhea" id="RHEA-COMP:10439"/>
        <dbReference type="ChEBI" id="CHEBI:15377"/>
        <dbReference type="ChEBI" id="CHEBI:15378"/>
        <dbReference type="ChEBI" id="CHEBI:15379"/>
        <dbReference type="ChEBI" id="CHEBI:29033"/>
        <dbReference type="ChEBI" id="CHEBI:29034"/>
        <dbReference type="ChEBI" id="CHEBI:57383"/>
        <dbReference type="ChEBI" id="CHEBI:57387"/>
        <dbReference type="EC" id="1.14.19.6"/>
    </reaction>
    <physiologicalReaction direction="left-to-right" evidence="11 12">
        <dbReference type="Rhea" id="RHEA:25857"/>
    </physiologicalReaction>
</comment>
<comment type="catalytic activity">
    <reaction evidence="11">
        <text>(9Z)-hexadecenoyl-CoA + 2 Fe(II)-[cytochrome b5] + O2 + 2 H(+) = (9Z,12Z)-hexadecadienoyl-CoA + 2 Fe(III)-[cytochrome b5] + 2 H2O</text>
        <dbReference type="Rhea" id="RHEA:45096"/>
        <dbReference type="Rhea" id="RHEA-COMP:10438"/>
        <dbReference type="Rhea" id="RHEA-COMP:10439"/>
        <dbReference type="ChEBI" id="CHEBI:15377"/>
        <dbReference type="ChEBI" id="CHEBI:15378"/>
        <dbReference type="ChEBI" id="CHEBI:15379"/>
        <dbReference type="ChEBI" id="CHEBI:29033"/>
        <dbReference type="ChEBI" id="CHEBI:29034"/>
        <dbReference type="ChEBI" id="CHEBI:61540"/>
        <dbReference type="ChEBI" id="CHEBI:76552"/>
        <dbReference type="EC" id="1.14.19.6"/>
    </reaction>
    <physiologicalReaction direction="left-to-right" evidence="11">
        <dbReference type="Rhea" id="RHEA:45097"/>
    </physiologicalReaction>
</comment>
<comment type="catalytic activity">
    <reaction evidence="7">
        <text>hexadecanoyl-CoA + 2 Fe(II)-[cytochrome b5] + O2 + 2 H(+) = (9Z)-hexadecenoyl-CoA + 2 Fe(III)-[cytochrome b5] + 2 H2O</text>
        <dbReference type="Rhea" id="RHEA:36931"/>
        <dbReference type="Rhea" id="RHEA-COMP:10438"/>
        <dbReference type="Rhea" id="RHEA-COMP:10439"/>
        <dbReference type="ChEBI" id="CHEBI:15377"/>
        <dbReference type="ChEBI" id="CHEBI:15378"/>
        <dbReference type="ChEBI" id="CHEBI:15379"/>
        <dbReference type="ChEBI" id="CHEBI:29033"/>
        <dbReference type="ChEBI" id="CHEBI:29034"/>
        <dbReference type="ChEBI" id="CHEBI:57379"/>
        <dbReference type="ChEBI" id="CHEBI:61540"/>
    </reaction>
    <physiologicalReaction direction="left-to-right" evidence="12">
        <dbReference type="Rhea" id="RHEA:36932"/>
    </physiologicalReaction>
</comment>
<comment type="cofactor">
    <cofactor evidence="1">
        <name>Fe(2+)</name>
        <dbReference type="ChEBI" id="CHEBI:29033"/>
    </cofactor>
    <text evidence="1">Expected to bind 2 Fe(2+) ions per subunit.</text>
</comment>
<comment type="subcellular location">
    <subcellularLocation>
        <location evidence="4">Membrane</location>
        <topology evidence="4">Multi-pass membrane protein</topology>
    </subcellularLocation>
</comment>
<comment type="domain">
    <text evidence="5">The histidine box domains may contain the active site and/or be involved in metal ion binding.</text>
</comment>
<comment type="similarity">
    <text evidence="10">Belongs to the fatty acid desaturase type 1 family.</text>
</comment>
<feature type="chain" id="PRO_0000452361" description="Acyl-CoA Delta12-desaturase">
    <location>
        <begin position="1"/>
        <end position="357"/>
    </location>
</feature>
<feature type="transmembrane region" description="Helical" evidence="4">
    <location>
        <begin position="49"/>
        <end position="69"/>
    </location>
</feature>
<feature type="transmembrane region" description="Helical" evidence="4">
    <location>
        <begin position="72"/>
        <end position="92"/>
    </location>
</feature>
<feature type="transmembrane region" description="Helical" evidence="4">
    <location>
        <begin position="195"/>
        <end position="215"/>
    </location>
</feature>
<feature type="transmembrane region" description="Helical" evidence="4">
    <location>
        <begin position="223"/>
        <end position="245"/>
    </location>
</feature>
<feature type="short sequence motif" description="Histidine box-1" evidence="3">
    <location>
        <begin position="94"/>
        <end position="99"/>
    </location>
</feature>
<feature type="short sequence motif" description="Histidine box-2" evidence="3">
    <location>
        <begin position="131"/>
        <end position="135"/>
    </location>
</feature>
<feature type="short sequence motif" description="Histidine box-3" evidence="3">
    <location>
        <begin position="272"/>
        <end position="276"/>
    </location>
</feature>
<feature type="binding site" evidence="2">
    <location>
        <position position="94"/>
    </location>
    <ligand>
        <name>Fe cation</name>
        <dbReference type="ChEBI" id="CHEBI:24875"/>
        <label>1</label>
    </ligand>
</feature>
<feature type="binding site" evidence="2">
    <location>
        <position position="99"/>
    </location>
    <ligand>
        <name>Fe cation</name>
        <dbReference type="ChEBI" id="CHEBI:24875"/>
        <label>1</label>
    </ligand>
</feature>
<feature type="binding site" evidence="2">
    <location>
        <position position="131"/>
    </location>
    <ligand>
        <name>Fe cation</name>
        <dbReference type="ChEBI" id="CHEBI:24875"/>
        <label>1</label>
    </ligand>
</feature>
<feature type="binding site" evidence="2">
    <location>
        <position position="134"/>
    </location>
    <ligand>
        <name>Fe cation</name>
        <dbReference type="ChEBI" id="CHEBI:24875"/>
        <label>2</label>
    </ligand>
</feature>
<feature type="binding site" evidence="2">
    <location>
        <position position="135"/>
    </location>
    <ligand>
        <name>Fe cation</name>
        <dbReference type="ChEBI" id="CHEBI:24875"/>
        <label>1</label>
    </ligand>
</feature>
<feature type="binding site" evidence="2">
    <location>
        <position position="243"/>
    </location>
    <ligand>
        <name>Fe cation</name>
        <dbReference type="ChEBI" id="CHEBI:24875"/>
        <label>2</label>
    </ligand>
</feature>
<feature type="binding site" evidence="2">
    <location>
        <position position="272"/>
    </location>
    <ligand>
        <name>Fe cation</name>
        <dbReference type="ChEBI" id="CHEBI:24875"/>
        <label>2</label>
    </ligand>
</feature>
<feature type="binding site" evidence="2">
    <location>
        <position position="275"/>
    </location>
    <ligand>
        <name>Fe cation</name>
        <dbReference type="ChEBI" id="CHEBI:24875"/>
        <label>1</label>
    </ligand>
</feature>
<feature type="binding site" evidence="2">
    <location>
        <position position="276"/>
    </location>
    <ligand>
        <name>Fe cation</name>
        <dbReference type="ChEBI" id="CHEBI:24875"/>
        <label>2</label>
    </ligand>
</feature>
<name>FAD12_ACHDO</name>
<evidence type="ECO:0000250" key="1">
    <source>
        <dbReference type="UniProtKB" id="O00767"/>
    </source>
</evidence>
<evidence type="ECO:0000250" key="2">
    <source>
        <dbReference type="UniProtKB" id="P13516"/>
    </source>
</evidence>
<evidence type="ECO:0000250" key="3">
    <source>
        <dbReference type="UniProtKB" id="Q99PL7"/>
    </source>
</evidence>
<evidence type="ECO:0000255" key="4"/>
<evidence type="ECO:0000255" key="5">
    <source>
        <dbReference type="RuleBase" id="RU000581"/>
    </source>
</evidence>
<evidence type="ECO:0000269" key="6">
    <source>
    </source>
</evidence>
<evidence type="ECO:0000269" key="7">
    <source>
    </source>
</evidence>
<evidence type="ECO:0000303" key="8">
    <source>
    </source>
</evidence>
<evidence type="ECO:0000303" key="9">
    <source>
    </source>
</evidence>
<evidence type="ECO:0000305" key="10"/>
<evidence type="ECO:0000305" key="11">
    <source>
    </source>
</evidence>
<evidence type="ECO:0000305" key="12">
    <source>
    </source>
</evidence>
<evidence type="ECO:0000312" key="13">
    <source>
        <dbReference type="EMBL" id="ABY26957.1"/>
    </source>
</evidence>
<protein>
    <recommendedName>
        <fullName evidence="8">Acyl-CoA Delta12-desaturase</fullName>
        <shortName evidence="8">AdD12Des</shortName>
        <ecNumber evidence="7 11">1.14.19.6</ecNumber>
    </recommendedName>
    <alternativeName>
        <fullName evidence="9">Delta-12/Delta9 desaturase</fullName>
        <shortName evidence="9">AdD12/9des</shortName>
    </alternativeName>
</protein>
<gene>
    <name evidence="13" type="primary">D12Des</name>
</gene>
<accession>B7SB91</accession>
<sequence>MDLNEESAPSGVLFEEDVAEQEAKMANGGPKKGKKLEEPYRLEIVWFNVLWFVLLHAGALYGVYLIFASAKIYTTLYGFLLCELSLLSITAGVHRLWAHRAYKAKWPLRLTLMVLNLLAYQNSIYEWARDHRVHHKFSETNADPVNAKRGFFFSHVGWLLCRKHPEVRAKGGRIDLSDLERDPIVMFQKRHYYKLVPFVSFVIPTLIPMYFWGETLSNSWYVSTMFRYCLSLNLTWLVNSAAHMWGNKPYDKNINPVENLAVAIGSLGEGWHNFHHVFPWDYKTSELGNYSLNFTNAFIDLAVLLGLAYDLKTVPVSMIKTRVGRTGDGSHDVWGWGDKDLPKELADQTMIENRKTE</sequence>
<dbReference type="EC" id="1.14.19.6" evidence="7 11"/>
<dbReference type="EMBL" id="EU159448">
    <property type="protein sequence ID" value="ABY26957.1"/>
    <property type="molecule type" value="mRNA"/>
</dbReference>
<dbReference type="SMR" id="B7SB91"/>
<dbReference type="SwissLipids" id="SLP:000000456"/>
<dbReference type="BRENDA" id="1.14.19.6">
    <property type="organism ID" value="7760"/>
</dbReference>
<dbReference type="GO" id="GO:0005789">
    <property type="term" value="C:endoplasmic reticulum membrane"/>
    <property type="evidence" value="ECO:0007669"/>
    <property type="project" value="TreeGrafter"/>
</dbReference>
<dbReference type="GO" id="GO:0102985">
    <property type="term" value="F:acyl-CoA (9+3)-desaturase activity"/>
    <property type="evidence" value="ECO:0007669"/>
    <property type="project" value="UniProtKB-EC"/>
</dbReference>
<dbReference type="GO" id="GO:0005506">
    <property type="term" value="F:iron ion binding"/>
    <property type="evidence" value="ECO:0007669"/>
    <property type="project" value="TreeGrafter"/>
</dbReference>
<dbReference type="GO" id="GO:0004768">
    <property type="term" value="F:stearoyl-CoA 9-desaturase activity"/>
    <property type="evidence" value="ECO:0007669"/>
    <property type="project" value="TreeGrafter"/>
</dbReference>
<dbReference type="GO" id="GO:0006636">
    <property type="term" value="P:unsaturated fatty acid biosynthetic process"/>
    <property type="evidence" value="ECO:0007669"/>
    <property type="project" value="TreeGrafter"/>
</dbReference>
<dbReference type="CDD" id="cd03505">
    <property type="entry name" value="Delta9-FADS-like"/>
    <property type="match status" value="1"/>
</dbReference>
<dbReference type="InterPro" id="IPR015876">
    <property type="entry name" value="Acyl-CoA_DS"/>
</dbReference>
<dbReference type="InterPro" id="IPR005804">
    <property type="entry name" value="FA_desaturase_dom"/>
</dbReference>
<dbReference type="PANTHER" id="PTHR11351">
    <property type="entry name" value="ACYL-COA DESATURASE"/>
    <property type="match status" value="1"/>
</dbReference>
<dbReference type="PANTHER" id="PTHR11351:SF31">
    <property type="entry name" value="DESATURASE 1, ISOFORM A-RELATED"/>
    <property type="match status" value="1"/>
</dbReference>
<dbReference type="Pfam" id="PF00487">
    <property type="entry name" value="FA_desaturase"/>
    <property type="match status" value="1"/>
</dbReference>
<dbReference type="PRINTS" id="PR00075">
    <property type="entry name" value="FACDDSATRASE"/>
</dbReference>